<accession>Q8DGJ7</accession>
<dbReference type="EC" id="2.4.2.9" evidence="2"/>
<dbReference type="EMBL" id="BA000039">
    <property type="protein sequence ID" value="BAC09872.1"/>
    <property type="molecule type" value="Genomic_DNA"/>
</dbReference>
<dbReference type="RefSeq" id="NP_683110.1">
    <property type="nucleotide sequence ID" value="NC_004113.1"/>
</dbReference>
<dbReference type="SMR" id="Q8DGJ7"/>
<dbReference type="STRING" id="197221.gene:10748939"/>
<dbReference type="EnsemblBacteria" id="BAC09872">
    <property type="protein sequence ID" value="BAC09872"/>
    <property type="gene ID" value="BAC09872"/>
</dbReference>
<dbReference type="KEGG" id="tel:tll2320"/>
<dbReference type="PATRIC" id="fig|197221.4.peg.2432"/>
<dbReference type="eggNOG" id="COG2065">
    <property type="taxonomic scope" value="Bacteria"/>
</dbReference>
<dbReference type="Proteomes" id="UP000000440">
    <property type="component" value="Chromosome"/>
</dbReference>
<dbReference type="GO" id="GO:0004845">
    <property type="term" value="F:uracil phosphoribosyltransferase activity"/>
    <property type="evidence" value="ECO:0007669"/>
    <property type="project" value="UniProtKB-UniRule"/>
</dbReference>
<dbReference type="GO" id="GO:0006355">
    <property type="term" value="P:regulation of DNA-templated transcription"/>
    <property type="evidence" value="ECO:0007669"/>
    <property type="project" value="UniProtKB-UniRule"/>
</dbReference>
<dbReference type="CDD" id="cd06223">
    <property type="entry name" value="PRTases_typeI"/>
    <property type="match status" value="1"/>
</dbReference>
<dbReference type="FunFam" id="3.40.50.2020:FF:000020">
    <property type="entry name" value="Bifunctional protein PyrR"/>
    <property type="match status" value="1"/>
</dbReference>
<dbReference type="Gene3D" id="3.40.50.2020">
    <property type="match status" value="1"/>
</dbReference>
<dbReference type="HAMAP" id="MF_01219">
    <property type="entry name" value="PyrR"/>
    <property type="match status" value="1"/>
</dbReference>
<dbReference type="InterPro" id="IPR000836">
    <property type="entry name" value="PRibTrfase_dom"/>
</dbReference>
<dbReference type="InterPro" id="IPR029057">
    <property type="entry name" value="PRTase-like"/>
</dbReference>
<dbReference type="InterPro" id="IPR023050">
    <property type="entry name" value="PyrR"/>
</dbReference>
<dbReference type="InterPro" id="IPR050137">
    <property type="entry name" value="PyrR_bifunctional"/>
</dbReference>
<dbReference type="NCBIfam" id="NF003549">
    <property type="entry name" value="PRK05205.1-5"/>
    <property type="match status" value="1"/>
</dbReference>
<dbReference type="PANTHER" id="PTHR11608">
    <property type="entry name" value="BIFUNCTIONAL PROTEIN PYRR"/>
    <property type="match status" value="1"/>
</dbReference>
<dbReference type="PANTHER" id="PTHR11608:SF0">
    <property type="entry name" value="BIFUNCTIONAL PROTEIN PYRR"/>
    <property type="match status" value="1"/>
</dbReference>
<dbReference type="Pfam" id="PF00156">
    <property type="entry name" value="Pribosyltran"/>
    <property type="match status" value="1"/>
</dbReference>
<dbReference type="SUPFAM" id="SSF53271">
    <property type="entry name" value="PRTase-like"/>
    <property type="match status" value="1"/>
</dbReference>
<gene>
    <name evidence="2" type="primary">pyrR</name>
    <name type="ordered locus">tll2320</name>
</gene>
<protein>
    <recommendedName>
        <fullName evidence="2">Bifunctional protein PyrR</fullName>
    </recommendedName>
    <domain>
        <recommendedName>
            <fullName evidence="2">Pyrimidine operon regulatory protein</fullName>
        </recommendedName>
    </domain>
    <domain>
        <recommendedName>
            <fullName evidence="2">Uracil phosphoribosyltransferase</fullName>
            <shortName evidence="2">UPRTase</shortName>
            <ecNumber evidence="2">2.4.2.9</ecNumber>
        </recommendedName>
    </domain>
</protein>
<reference key="1">
    <citation type="journal article" date="2002" name="DNA Res.">
        <title>Complete genome structure of the thermophilic cyanobacterium Thermosynechococcus elongatus BP-1.</title>
        <authorList>
            <person name="Nakamura Y."/>
            <person name="Kaneko T."/>
            <person name="Sato S."/>
            <person name="Ikeuchi M."/>
            <person name="Katoh H."/>
            <person name="Sasamoto S."/>
            <person name="Watanabe A."/>
            <person name="Iriguchi M."/>
            <person name="Kawashima K."/>
            <person name="Kimura T."/>
            <person name="Kishida Y."/>
            <person name="Kiyokawa C."/>
            <person name="Kohara M."/>
            <person name="Matsumoto M."/>
            <person name="Matsuno A."/>
            <person name="Nakazaki N."/>
            <person name="Shimpo S."/>
            <person name="Sugimoto M."/>
            <person name="Takeuchi C."/>
            <person name="Yamada M."/>
            <person name="Tabata S."/>
        </authorList>
    </citation>
    <scope>NUCLEOTIDE SEQUENCE [LARGE SCALE GENOMIC DNA]</scope>
    <source>
        <strain>NIES-2133 / IAM M-273 / BP-1</strain>
    </source>
</reference>
<organism>
    <name type="scientific">Thermosynechococcus vestitus (strain NIES-2133 / IAM M-273 / BP-1)</name>
    <dbReference type="NCBI Taxonomy" id="197221"/>
    <lineage>
        <taxon>Bacteria</taxon>
        <taxon>Bacillati</taxon>
        <taxon>Cyanobacteriota</taxon>
        <taxon>Cyanophyceae</taxon>
        <taxon>Acaryochloridales</taxon>
        <taxon>Thermosynechococcaceae</taxon>
        <taxon>Thermosynechococcus</taxon>
    </lineage>
</organism>
<evidence type="ECO:0000250" key="1"/>
<evidence type="ECO:0000255" key="2">
    <source>
        <dbReference type="HAMAP-Rule" id="MF_01219"/>
    </source>
</evidence>
<proteinExistence type="inferred from homology"/>
<keyword id="KW-0328">Glycosyltransferase</keyword>
<keyword id="KW-1185">Reference proteome</keyword>
<keyword id="KW-0804">Transcription</keyword>
<keyword id="KW-0805">Transcription regulation</keyword>
<keyword id="KW-0808">Transferase</keyword>
<sequence>MTAMAGEVVEILSADDLRRTLTRLASQVVEKARDALDKLVLLGIHTRGVPLAKLLGQQVEQLEGASLPIGELDITFYRDDLDRIGPRTPRQTLIPVDLSGRIVVLVDDVIFSGRTIRSALNAVHDYGRPNAIWLLALIDRGHRELPIHPDFTGKALPTARDEVVKVLLQGIDQRDGVELWKPS</sequence>
<comment type="function">
    <text evidence="2">Regulates the transcription of the pyrimidine nucleotide (pyr) operon in response to exogenous pyrimidines.</text>
</comment>
<comment type="function">
    <text evidence="2">Also displays a weak uracil phosphoribosyltransferase activity which is not physiologically significant.</text>
</comment>
<comment type="catalytic activity">
    <reaction evidence="2">
        <text>UMP + diphosphate = 5-phospho-alpha-D-ribose 1-diphosphate + uracil</text>
        <dbReference type="Rhea" id="RHEA:13017"/>
        <dbReference type="ChEBI" id="CHEBI:17568"/>
        <dbReference type="ChEBI" id="CHEBI:33019"/>
        <dbReference type="ChEBI" id="CHEBI:57865"/>
        <dbReference type="ChEBI" id="CHEBI:58017"/>
        <dbReference type="EC" id="2.4.2.9"/>
    </reaction>
</comment>
<comment type="similarity">
    <text evidence="2">Belongs to the purine/pyrimidine phosphoribosyltransferase family. PyrR subfamily.</text>
</comment>
<feature type="chain" id="PRO_0000183070" description="Bifunctional protein PyrR">
    <location>
        <begin position="1"/>
        <end position="183"/>
    </location>
</feature>
<feature type="short sequence motif" description="PRPP-binding" evidence="2">
    <location>
        <begin position="103"/>
        <end position="115"/>
    </location>
</feature>
<feature type="binding site" description="in other chain" evidence="1">
    <location>
        <begin position="46"/>
        <end position="47"/>
    </location>
    <ligand>
        <name>substrate</name>
        <note>ligand shared between dimeric partners</note>
    </ligand>
</feature>
<feature type="binding site" evidence="1">
    <location>
        <position position="87"/>
    </location>
    <ligand>
        <name>substrate</name>
        <note>ligand shared between dimeric partners</note>
    </ligand>
</feature>
<feature type="binding site" description="in other chain" evidence="1">
    <location>
        <begin position="107"/>
        <end position="115"/>
    </location>
    <ligand>
        <name>substrate</name>
        <note>ligand shared between dimeric partners</note>
    </ligand>
</feature>
<feature type="binding site" description="in other chain" evidence="1">
    <location>
        <position position="140"/>
    </location>
    <ligand>
        <name>substrate</name>
        <note>ligand shared between dimeric partners</note>
    </ligand>
</feature>
<feature type="binding site" description="in other chain" evidence="1">
    <location>
        <position position="164"/>
    </location>
    <ligand>
        <name>substrate</name>
        <note>ligand shared between dimeric partners</note>
    </ligand>
</feature>
<name>PYRR_THEVB</name>